<proteinExistence type="inferred from homology"/>
<accession>B9DVV8</accession>
<gene>
    <name evidence="1" type="primary">argH</name>
    <name type="ordered locus">SUB1668</name>
</gene>
<feature type="chain" id="PRO_1000116347" description="Argininosuccinate lyase">
    <location>
        <begin position="1"/>
        <end position="460"/>
    </location>
</feature>
<organism>
    <name type="scientific">Streptococcus uberis (strain ATCC BAA-854 / 0140J)</name>
    <dbReference type="NCBI Taxonomy" id="218495"/>
    <lineage>
        <taxon>Bacteria</taxon>
        <taxon>Bacillati</taxon>
        <taxon>Bacillota</taxon>
        <taxon>Bacilli</taxon>
        <taxon>Lactobacillales</taxon>
        <taxon>Streptococcaceae</taxon>
        <taxon>Streptococcus</taxon>
    </lineage>
</organism>
<reference key="1">
    <citation type="journal article" date="2009" name="BMC Genomics">
        <title>Evidence for niche adaptation in the genome of the bovine pathogen Streptococcus uberis.</title>
        <authorList>
            <person name="Ward P.N."/>
            <person name="Holden M.T.G."/>
            <person name="Leigh J.A."/>
            <person name="Lennard N."/>
            <person name="Bignell A."/>
            <person name="Barron A."/>
            <person name="Clark L."/>
            <person name="Quail M.A."/>
            <person name="Woodward J."/>
            <person name="Barrell B.G."/>
            <person name="Egan S.A."/>
            <person name="Field T.R."/>
            <person name="Maskell D."/>
            <person name="Kehoe M."/>
            <person name="Dowson C.G."/>
            <person name="Chanter N."/>
            <person name="Whatmore A.M."/>
            <person name="Bentley S.D."/>
            <person name="Parkhill J."/>
        </authorList>
    </citation>
    <scope>NUCLEOTIDE SEQUENCE [LARGE SCALE GENOMIC DNA]</scope>
    <source>
        <strain>ATCC BAA-854 / 0140J</strain>
    </source>
</reference>
<comment type="catalytic activity">
    <reaction evidence="1">
        <text>2-(N(omega)-L-arginino)succinate = fumarate + L-arginine</text>
        <dbReference type="Rhea" id="RHEA:24020"/>
        <dbReference type="ChEBI" id="CHEBI:29806"/>
        <dbReference type="ChEBI" id="CHEBI:32682"/>
        <dbReference type="ChEBI" id="CHEBI:57472"/>
        <dbReference type="EC" id="4.3.2.1"/>
    </reaction>
</comment>
<comment type="pathway">
    <text evidence="1">Amino-acid biosynthesis; L-arginine biosynthesis; L-arginine from L-ornithine and carbamoyl phosphate: step 3/3.</text>
</comment>
<comment type="subcellular location">
    <subcellularLocation>
        <location evidence="1">Cytoplasm</location>
    </subcellularLocation>
</comment>
<comment type="similarity">
    <text evidence="1">Belongs to the lyase 1 family. Argininosuccinate lyase subfamily.</text>
</comment>
<protein>
    <recommendedName>
        <fullName evidence="1">Argininosuccinate lyase</fullName>
        <shortName evidence="1">ASAL</shortName>
        <ecNumber evidence="1">4.3.2.1</ecNumber>
    </recommendedName>
    <alternativeName>
        <fullName evidence="1">Arginosuccinase</fullName>
    </alternativeName>
</protein>
<sequence length="460" mass="52002">MMGNQKLWGGRFEKGLEQWVEEFGASISFDYKLATFDIKASIAHVSMLGQQGIISKDEAELIKTGLEDIHRDILEEEIVFDSQDEDIHMTIERQLLAKIGPLAGKLHTARSRNDQVATDMHLYLKHILEALLEKLLQLRKVLVTLAEEHIETILPGYTHLQHAQPISFGHHLMAYYQMFTRDSERFKFNMKHTDMSPLGAAALAGTTFPIDRELTAQLLGFNELYHNSLDAVSDRDFIIEFLANASLLMMHMSRFCEEIILWTSYEYQFVSLSDSFSTGSSIMPQKKNPDMAELIRGKTGRVYGNLFSLLTVMKALPLAYNKDLQEDKEGLFDTAETILVAVDILAGMLSTMTVHKETMYRATQKDFSNATELADYLANKDMPFRQAHEIVGQLVLQASKEGIYLQDIPIKDFKAISPLIEEDIYDTLTSRAAVERRTSIGGTGFNQVSSQIALARKDLS</sequence>
<dbReference type="EC" id="4.3.2.1" evidence="1"/>
<dbReference type="EMBL" id="AM946015">
    <property type="protein sequence ID" value="CAR43559.1"/>
    <property type="molecule type" value="Genomic_DNA"/>
</dbReference>
<dbReference type="RefSeq" id="WP_015911965.1">
    <property type="nucleotide sequence ID" value="NC_012004.1"/>
</dbReference>
<dbReference type="SMR" id="B9DVV8"/>
<dbReference type="STRING" id="218495.SUB1668"/>
<dbReference type="GeneID" id="93826993"/>
<dbReference type="KEGG" id="sub:SUB1668"/>
<dbReference type="eggNOG" id="COG0165">
    <property type="taxonomic scope" value="Bacteria"/>
</dbReference>
<dbReference type="HOGENOM" id="CLU_027272_2_3_9"/>
<dbReference type="OrthoDB" id="9769623at2"/>
<dbReference type="UniPathway" id="UPA00068">
    <property type="reaction ID" value="UER00114"/>
</dbReference>
<dbReference type="Proteomes" id="UP000000449">
    <property type="component" value="Chromosome"/>
</dbReference>
<dbReference type="GO" id="GO:0005829">
    <property type="term" value="C:cytosol"/>
    <property type="evidence" value="ECO:0007669"/>
    <property type="project" value="TreeGrafter"/>
</dbReference>
<dbReference type="GO" id="GO:0004056">
    <property type="term" value="F:argininosuccinate lyase activity"/>
    <property type="evidence" value="ECO:0007669"/>
    <property type="project" value="UniProtKB-UniRule"/>
</dbReference>
<dbReference type="GO" id="GO:0042450">
    <property type="term" value="P:arginine biosynthetic process via ornithine"/>
    <property type="evidence" value="ECO:0007669"/>
    <property type="project" value="InterPro"/>
</dbReference>
<dbReference type="GO" id="GO:0006526">
    <property type="term" value="P:L-arginine biosynthetic process"/>
    <property type="evidence" value="ECO:0007669"/>
    <property type="project" value="UniProtKB-UniRule"/>
</dbReference>
<dbReference type="CDD" id="cd01359">
    <property type="entry name" value="Argininosuccinate_lyase"/>
    <property type="match status" value="1"/>
</dbReference>
<dbReference type="FunFam" id="1.10.275.10:FF:000002">
    <property type="entry name" value="Argininosuccinate lyase"/>
    <property type="match status" value="1"/>
</dbReference>
<dbReference type="FunFam" id="1.10.40.30:FF:000001">
    <property type="entry name" value="Argininosuccinate lyase"/>
    <property type="match status" value="1"/>
</dbReference>
<dbReference type="FunFam" id="1.20.200.10:FF:000002">
    <property type="entry name" value="Argininosuccinate lyase"/>
    <property type="match status" value="1"/>
</dbReference>
<dbReference type="Gene3D" id="1.10.40.30">
    <property type="entry name" value="Fumarase/aspartase (C-terminal domain)"/>
    <property type="match status" value="1"/>
</dbReference>
<dbReference type="Gene3D" id="1.20.200.10">
    <property type="entry name" value="Fumarase/aspartase (Central domain)"/>
    <property type="match status" value="1"/>
</dbReference>
<dbReference type="Gene3D" id="1.10.275.10">
    <property type="entry name" value="Fumarase/aspartase (N-terminal domain)"/>
    <property type="match status" value="1"/>
</dbReference>
<dbReference type="HAMAP" id="MF_00006">
    <property type="entry name" value="Arg_succ_lyase"/>
    <property type="match status" value="1"/>
</dbReference>
<dbReference type="InterPro" id="IPR029419">
    <property type="entry name" value="Arg_succ_lyase_C"/>
</dbReference>
<dbReference type="InterPro" id="IPR009049">
    <property type="entry name" value="Argininosuccinate_lyase"/>
</dbReference>
<dbReference type="InterPro" id="IPR024083">
    <property type="entry name" value="Fumarase/histidase_N"/>
</dbReference>
<dbReference type="InterPro" id="IPR020557">
    <property type="entry name" value="Fumarate_lyase_CS"/>
</dbReference>
<dbReference type="InterPro" id="IPR000362">
    <property type="entry name" value="Fumarate_lyase_fam"/>
</dbReference>
<dbReference type="InterPro" id="IPR022761">
    <property type="entry name" value="Fumarate_lyase_N"/>
</dbReference>
<dbReference type="InterPro" id="IPR008948">
    <property type="entry name" value="L-Aspartase-like"/>
</dbReference>
<dbReference type="NCBIfam" id="TIGR00838">
    <property type="entry name" value="argH"/>
    <property type="match status" value="1"/>
</dbReference>
<dbReference type="PANTHER" id="PTHR43814">
    <property type="entry name" value="ARGININOSUCCINATE LYASE"/>
    <property type="match status" value="1"/>
</dbReference>
<dbReference type="PANTHER" id="PTHR43814:SF1">
    <property type="entry name" value="ARGININOSUCCINATE LYASE"/>
    <property type="match status" value="1"/>
</dbReference>
<dbReference type="Pfam" id="PF14698">
    <property type="entry name" value="ASL_C2"/>
    <property type="match status" value="1"/>
</dbReference>
<dbReference type="Pfam" id="PF00206">
    <property type="entry name" value="Lyase_1"/>
    <property type="match status" value="1"/>
</dbReference>
<dbReference type="PRINTS" id="PR00145">
    <property type="entry name" value="ARGSUCLYASE"/>
</dbReference>
<dbReference type="PRINTS" id="PR00149">
    <property type="entry name" value="FUMRATELYASE"/>
</dbReference>
<dbReference type="SUPFAM" id="SSF48557">
    <property type="entry name" value="L-aspartase-like"/>
    <property type="match status" value="1"/>
</dbReference>
<dbReference type="PROSITE" id="PS00163">
    <property type="entry name" value="FUMARATE_LYASES"/>
    <property type="match status" value="1"/>
</dbReference>
<evidence type="ECO:0000255" key="1">
    <source>
        <dbReference type="HAMAP-Rule" id="MF_00006"/>
    </source>
</evidence>
<name>ARLY_STRU0</name>
<keyword id="KW-0028">Amino-acid biosynthesis</keyword>
<keyword id="KW-0055">Arginine biosynthesis</keyword>
<keyword id="KW-0963">Cytoplasm</keyword>
<keyword id="KW-0456">Lyase</keyword>
<keyword id="KW-1185">Reference proteome</keyword>